<organism>
    <name type="scientific">Saccharomyces cerevisiae (strain ATCC 204508 / S288c)</name>
    <name type="common">Baker's yeast</name>
    <dbReference type="NCBI Taxonomy" id="559292"/>
    <lineage>
        <taxon>Eukaryota</taxon>
        <taxon>Fungi</taxon>
        <taxon>Dikarya</taxon>
        <taxon>Ascomycota</taxon>
        <taxon>Saccharomycotina</taxon>
        <taxon>Saccharomycetes</taxon>
        <taxon>Saccharomycetales</taxon>
        <taxon>Saccharomycetaceae</taxon>
        <taxon>Saccharomyces</taxon>
    </lineage>
</organism>
<comment type="function">
    <text evidence="12 13">Component of the mitochondrial ribosome (mitoribosome), a dedicated translation machinery responsible for the synthesis of mitochondrial genome-encoded proteins, including at least some of the essential transmembrane subunits of the mitochondrial respiratory chain. The mitoribosomes are attached to the mitochondrial inner membrane and translation products are cotranslationally integrated into the membrane.</text>
</comment>
<comment type="subunit">
    <text evidence="3 7 9">Component of the mitochondrial large ribosomal subunit (mt-LSU). Mature yeast 74S mitochondrial ribosomes consist of a small (37S) and a large (54S) subunit. The 37S small subunit contains a 15S ribosomal RNA (15S mt-rRNA) and 34 different proteins. The 54S large subunit contains a 21S rRNA (21S mt-rRNA) and 46 different proteins. mL44 forms a heterodimer with mL57 and stabilizes rRNA expansion segments 1/2 at a membrane-facing protuberance close to the point of attachment of the ribosome to the translocon in the membrane.</text>
</comment>
<comment type="subcellular location">
    <subcellularLocation>
        <location evidence="4 6">Mitochondrion</location>
    </subcellularLocation>
    <text evidence="8">Mitoribosomes are tethered to the mitochondrial inner membrane and spatially aligned with the membrane insertion machinery through two distinct membrane contact sites, formed by the 21S rRNA expansion segment 96-ES1 and the inner membrane protein MBA1.</text>
</comment>
<comment type="miscellaneous">
    <text evidence="5">Present with 300 molecules/cell in log phase SD medium.</text>
</comment>
<comment type="similarity">
    <text evidence="11">Belongs to the ribonuclease III family. Mitochondrion-specific ribosomal protein mL44 subfamily.</text>
</comment>
<sequence>MGIVLKRAIAAGMKPFPNSTWHWSRTIRPFSQHLSSTCFLQQSSRFTSKRYLHLSTLTQQEKRFLPESELAKYKEYYQGLKSTVNEIPESVASKSPSLRTLHKRLQLPNELTYSTLSRCLTCPSAKLPDKINNPTKGAAFVNTVPTNKYLDNHGLNIMGKNLLSYHVTKSIIQKYPRLPTVVLNAAVNAYISEAVLAHIAKYWGIEVETTSVLSRYLKMEPFEFTLGRLKFFNNSLNSKDGIELITGKNFSETSALAMSVRSIIAAIWAVTEQKDSQAVYRFIDDHIMSRKLDITKMFQFEQPTRELAMLCRREGLEKPVSKLVAESGRLSKSPVFIVHVFSGEETLGEGYGSSLKEAKARAATDALMKWYCYEPLAQQEPVIDPGTVVV</sequence>
<accession>P36516</accession>
<accession>D6VZJ8</accession>
<evidence type="ECO:0000255" key="1">
    <source>
        <dbReference type="PROSITE-ProRule" id="PRU00177"/>
    </source>
</evidence>
<evidence type="ECO:0000255" key="2">
    <source>
        <dbReference type="PROSITE-ProRule" id="PRU00266"/>
    </source>
</evidence>
<evidence type="ECO:0000269" key="3">
    <source>
    </source>
</evidence>
<evidence type="ECO:0000269" key="4">
    <source>
    </source>
</evidence>
<evidence type="ECO:0000269" key="5">
    <source>
    </source>
</evidence>
<evidence type="ECO:0000269" key="6">
    <source>
    </source>
</evidence>
<evidence type="ECO:0000269" key="7">
    <source>
    </source>
</evidence>
<evidence type="ECO:0000269" key="8">
    <source>
    </source>
</evidence>
<evidence type="ECO:0000269" key="9">
    <source>
    </source>
</evidence>
<evidence type="ECO:0000303" key="10">
    <source>
    </source>
</evidence>
<evidence type="ECO:0000305" key="11"/>
<evidence type="ECO:0000305" key="12">
    <source>
    </source>
</evidence>
<evidence type="ECO:0000305" key="13">
    <source>
    </source>
</evidence>
<protein>
    <recommendedName>
        <fullName evidence="10">Large ribosomal subunit protein mL44</fullName>
    </recommendedName>
    <alternativeName>
        <fullName>54S ribosomal protein L3, mitochondrial</fullName>
    </alternativeName>
    <alternativeName>
        <fullName>YmL3</fullName>
    </alternativeName>
</protein>
<reference key="1">
    <citation type="journal article" date="1997" name="Nature">
        <title>The nucleotide sequence of Saccharomyces cerevisiae chromosome XIII.</title>
        <authorList>
            <person name="Bowman S."/>
            <person name="Churcher C.M."/>
            <person name="Badcock K."/>
            <person name="Brown D."/>
            <person name="Chillingworth T."/>
            <person name="Connor R."/>
            <person name="Dedman K."/>
            <person name="Devlin K."/>
            <person name="Gentles S."/>
            <person name="Hamlin N."/>
            <person name="Hunt S."/>
            <person name="Jagels K."/>
            <person name="Lye G."/>
            <person name="Moule S."/>
            <person name="Odell C."/>
            <person name="Pearson D."/>
            <person name="Rajandream M.A."/>
            <person name="Rice P."/>
            <person name="Skelton J."/>
            <person name="Walsh S.V."/>
            <person name="Whitehead S."/>
            <person name="Barrell B.G."/>
        </authorList>
    </citation>
    <scope>NUCLEOTIDE SEQUENCE [LARGE SCALE GENOMIC DNA]</scope>
    <source>
        <strain>ATCC 204508 / S288c</strain>
    </source>
</reference>
<reference key="2">
    <citation type="journal article" date="2014" name="G3 (Bethesda)">
        <title>The reference genome sequence of Saccharomyces cerevisiae: Then and now.</title>
        <authorList>
            <person name="Engel S.R."/>
            <person name="Dietrich F.S."/>
            <person name="Fisk D.G."/>
            <person name="Binkley G."/>
            <person name="Balakrishnan R."/>
            <person name="Costanzo M.C."/>
            <person name="Dwight S.S."/>
            <person name="Hitz B.C."/>
            <person name="Karra K."/>
            <person name="Nash R.S."/>
            <person name="Weng S."/>
            <person name="Wong E.D."/>
            <person name="Lloyd P."/>
            <person name="Skrzypek M.S."/>
            <person name="Miyasato S.R."/>
            <person name="Simison M."/>
            <person name="Cherry J.M."/>
        </authorList>
    </citation>
    <scope>GENOME REANNOTATION</scope>
    <source>
        <strain>ATCC 204508 / S288c</strain>
    </source>
</reference>
<reference key="3">
    <citation type="journal article" date="2007" name="Genome Res.">
        <title>Approaching a complete repository of sequence-verified protein-encoding clones for Saccharomyces cerevisiae.</title>
        <authorList>
            <person name="Hu Y."/>
            <person name="Rolfs A."/>
            <person name="Bhullar B."/>
            <person name="Murthy T.V.S."/>
            <person name="Zhu C."/>
            <person name="Berger M.F."/>
            <person name="Camargo A.A."/>
            <person name="Kelley F."/>
            <person name="McCarron S."/>
            <person name="Jepson D."/>
            <person name="Richardson A."/>
            <person name="Raphael J."/>
            <person name="Moreira D."/>
            <person name="Taycher E."/>
            <person name="Zuo D."/>
            <person name="Mohr S."/>
            <person name="Kane M.F."/>
            <person name="Williamson J."/>
            <person name="Simpson A.J.G."/>
            <person name="Bulyk M.L."/>
            <person name="Harlow E."/>
            <person name="Marsischky G."/>
            <person name="Kolodner R.D."/>
            <person name="LaBaer J."/>
        </authorList>
    </citation>
    <scope>NUCLEOTIDE SEQUENCE [GENOMIC DNA]</scope>
    <source>
        <strain>ATCC 204508 / S288c</strain>
    </source>
</reference>
<reference key="4">
    <citation type="journal article" date="1988" name="FEBS Lett.">
        <title>Mitochondrial ribosomes of yeast: isolation of individual proteins and N-terminal sequencing.</title>
        <authorList>
            <person name="Graack H.-R."/>
            <person name="Grohmann L."/>
            <person name="Choli T."/>
        </authorList>
    </citation>
    <scope>PROTEIN SEQUENCE OF 60-87</scope>
    <scope>SUBUNIT</scope>
    <source>
        <strain>07173</strain>
    </source>
</reference>
<reference key="5">
    <citation type="journal article" date="2003" name="J. Biol. Chem.">
        <title>The yeast mitochondrial degradosome. Its composition, interplay between RNA helicase and RNase activities and the role in mitochondrial RNA metabolism.</title>
        <authorList>
            <person name="Dziembowski A."/>
            <person name="Piwowarski J."/>
            <person name="Hoser R."/>
            <person name="Minczuk M."/>
            <person name="Dmochowska A."/>
            <person name="Siep M."/>
            <person name="van der Spek H."/>
            <person name="Grivell L.A."/>
            <person name="Stepien P.P."/>
        </authorList>
    </citation>
    <scope>PROTEIN SEQUENCE OF 64-72; 82-94; 105-118; 219-228; 231-239; 262-274 AND 333-356</scope>
    <source>
        <strain>ATCC 200060 / W303</strain>
    </source>
</reference>
<reference key="6">
    <citation type="journal article" date="2002" name="Eur. J. Biochem.">
        <title>Tag-mediated isolation of yeast mitochondrial ribosome and mass spectrometric identification of its new components.</title>
        <authorList>
            <person name="Gan X."/>
            <person name="Kitakawa M."/>
            <person name="Yoshino K."/>
            <person name="Oshiro N."/>
            <person name="Yonezawa K."/>
            <person name="Isono K."/>
        </authorList>
    </citation>
    <scope>IDENTIFICATION IN THE MITOCHONDRIAL RIBOSOMAL LARGE COMPLEX</scope>
    <scope>IDENTIFICATION BY MASS SPECTROMETRY</scope>
</reference>
<reference key="7">
    <citation type="journal article" date="2003" name="Nature">
        <title>Global analysis of protein localization in budding yeast.</title>
        <authorList>
            <person name="Huh W.-K."/>
            <person name="Falvo J.V."/>
            <person name="Gerke L.C."/>
            <person name="Carroll A.S."/>
            <person name="Howson R.W."/>
            <person name="Weissman J.S."/>
            <person name="O'Shea E.K."/>
        </authorList>
    </citation>
    <scope>SUBCELLULAR LOCATION [LARGE SCALE ANALYSIS]</scope>
</reference>
<reference key="8">
    <citation type="journal article" date="2003" name="Nature">
        <title>Global analysis of protein expression in yeast.</title>
        <authorList>
            <person name="Ghaemmaghami S."/>
            <person name="Huh W.-K."/>
            <person name="Bower K."/>
            <person name="Howson R.W."/>
            <person name="Belle A."/>
            <person name="Dephoure N."/>
            <person name="O'Shea E.K."/>
            <person name="Weissman J.S."/>
        </authorList>
    </citation>
    <scope>LEVEL OF PROTEIN EXPRESSION [LARGE SCALE ANALYSIS]</scope>
</reference>
<reference key="9">
    <citation type="journal article" date="2003" name="Proc. Natl. Acad. Sci. U.S.A.">
        <title>The proteome of Saccharomyces cerevisiae mitochondria.</title>
        <authorList>
            <person name="Sickmann A."/>
            <person name="Reinders J."/>
            <person name="Wagner Y."/>
            <person name="Joppich C."/>
            <person name="Zahedi R.P."/>
            <person name="Meyer H.E."/>
            <person name="Schoenfisch B."/>
            <person name="Perschil I."/>
            <person name="Chacinska A."/>
            <person name="Guiard B."/>
            <person name="Rehling P."/>
            <person name="Pfanner N."/>
            <person name="Meisinger C."/>
        </authorList>
    </citation>
    <scope>SUBCELLULAR LOCATION [LARGE SCALE ANALYSIS]</scope>
    <source>
        <strain>ATCC 76625 / YPH499</strain>
    </source>
</reference>
<reference key="10">
    <citation type="journal article" date="2015" name="Nat. Commun.">
        <title>Organization of the mitochondrial translation machinery studied in situ by cryoelectron tomography.</title>
        <authorList>
            <person name="Pfeffer S."/>
            <person name="Woellhaf M.W."/>
            <person name="Herrmann J.M."/>
            <person name="Forster F."/>
        </authorList>
    </citation>
    <scope>SUBCELLULAR LOCATION</scope>
</reference>
<reference key="11">
    <citation type="journal article" date="2014" name="Science">
        <title>Structure of the yeast mitochondrial large ribosomal subunit.</title>
        <authorList>
            <person name="Amunts A."/>
            <person name="Brown A."/>
            <person name="Bai X.C."/>
            <person name="Llacer J.L."/>
            <person name="Hussain T."/>
            <person name="Emsley P."/>
            <person name="Long F."/>
            <person name="Murshudov G."/>
            <person name="Scheres S.H."/>
            <person name="Ramakrishnan V."/>
        </authorList>
    </citation>
    <scope>STRUCTURE BY ELECTRON MICROSCOPY (3.20 ANGSTROMS)</scope>
    <scope>SUBUNIT</scope>
</reference>
<name>RM03_YEAST</name>
<keyword id="KW-0002">3D-structure</keyword>
<keyword id="KW-0903">Direct protein sequencing</keyword>
<keyword id="KW-0496">Mitochondrion</keyword>
<keyword id="KW-1185">Reference proteome</keyword>
<keyword id="KW-0687">Ribonucleoprotein</keyword>
<keyword id="KW-0689">Ribosomal protein</keyword>
<keyword id="KW-0694">RNA-binding</keyword>
<keyword id="KW-0809">Transit peptide</keyword>
<feature type="transit peptide" description="Mitochondrion" evidence="9">
    <location>
        <begin position="1"/>
        <end position="59"/>
    </location>
</feature>
<feature type="chain" id="PRO_0000030569" description="Large ribosomal subunit protein mL44">
    <location>
        <begin position="60"/>
        <end position="390"/>
    </location>
</feature>
<feature type="domain" description="RNase III" evidence="1">
    <location>
        <begin position="139"/>
        <end position="205"/>
    </location>
</feature>
<feature type="domain" description="DRBM" evidence="2">
    <location>
        <begin position="302"/>
        <end position="372"/>
    </location>
</feature>
<feature type="sequence conflict" description="In Ref. 4; AA sequence." evidence="11" ref="4">
    <original>Q</original>
    <variation>E</variation>
    <location>
        <position position="60"/>
    </location>
</feature>
<proteinExistence type="evidence at protein level"/>
<dbReference type="EMBL" id="Z49211">
    <property type="protein sequence ID" value="CAA89127.1"/>
    <property type="molecule type" value="Genomic_DNA"/>
</dbReference>
<dbReference type="EMBL" id="AY693061">
    <property type="protein sequence ID" value="AAT93080.1"/>
    <property type="molecule type" value="Genomic_DNA"/>
</dbReference>
<dbReference type="EMBL" id="BK006946">
    <property type="protein sequence ID" value="DAA09922.1"/>
    <property type="molecule type" value="Genomic_DNA"/>
</dbReference>
<dbReference type="PIR" id="S54026">
    <property type="entry name" value="S54026"/>
</dbReference>
<dbReference type="RefSeq" id="NP_013737.1">
    <property type="nucleotide sequence ID" value="NM_001182520.1"/>
</dbReference>
<dbReference type="PDB" id="3J6B">
    <property type="method" value="EM"/>
    <property type="resolution" value="3.20 A"/>
    <property type="chains" value="5=1-390"/>
</dbReference>
<dbReference type="PDB" id="5MRC">
    <property type="method" value="EM"/>
    <property type="resolution" value="3.25 A"/>
    <property type="chains" value="5=67-390"/>
</dbReference>
<dbReference type="PDB" id="5MRE">
    <property type="method" value="EM"/>
    <property type="resolution" value="3.75 A"/>
    <property type="chains" value="5=67-390"/>
</dbReference>
<dbReference type="PDB" id="5MRF">
    <property type="method" value="EM"/>
    <property type="resolution" value="4.97 A"/>
    <property type="chains" value="5=67-390"/>
</dbReference>
<dbReference type="PDBsum" id="3J6B"/>
<dbReference type="PDBsum" id="5MRC"/>
<dbReference type="PDBsum" id="5MRE"/>
<dbReference type="PDBsum" id="5MRF"/>
<dbReference type="EMDB" id="EMD-3551"/>
<dbReference type="EMDB" id="EMD-3552"/>
<dbReference type="EMDB" id="EMD-3553"/>
<dbReference type="SMR" id="P36516"/>
<dbReference type="BioGRID" id="35196">
    <property type="interactions" value="135"/>
</dbReference>
<dbReference type="ComplexPortal" id="CPX-1602">
    <property type="entry name" value="54S mitochondrial large ribosomal subunit"/>
</dbReference>
<dbReference type="DIP" id="DIP-6798N"/>
<dbReference type="FunCoup" id="P36516">
    <property type="interactions" value="534"/>
</dbReference>
<dbReference type="IntAct" id="P36516">
    <property type="interactions" value="74"/>
</dbReference>
<dbReference type="MINT" id="P36516"/>
<dbReference type="STRING" id="4932.YMR024W"/>
<dbReference type="iPTMnet" id="P36516"/>
<dbReference type="PaxDb" id="4932-YMR024W"/>
<dbReference type="PeptideAtlas" id="P36516"/>
<dbReference type="EnsemblFungi" id="YMR024W_mRNA">
    <property type="protein sequence ID" value="YMR024W"/>
    <property type="gene ID" value="YMR024W"/>
</dbReference>
<dbReference type="GeneID" id="855039"/>
<dbReference type="KEGG" id="sce:YMR024W"/>
<dbReference type="AGR" id="SGD:S000004626"/>
<dbReference type="SGD" id="S000004626">
    <property type="gene designation" value="MRPL3"/>
</dbReference>
<dbReference type="VEuPathDB" id="FungiDB:YMR024W"/>
<dbReference type="eggNOG" id="KOG3769">
    <property type="taxonomic scope" value="Eukaryota"/>
</dbReference>
<dbReference type="HOGENOM" id="CLU_034765_1_0_1"/>
<dbReference type="InParanoid" id="P36516"/>
<dbReference type="OMA" id="YLYSPGN"/>
<dbReference type="OrthoDB" id="67027at2759"/>
<dbReference type="BioCyc" id="YEAST:G3O-32729-MONOMER"/>
<dbReference type="BioGRID-ORCS" id="855039">
    <property type="hits" value="1 hit in 10 CRISPR screens"/>
</dbReference>
<dbReference type="PRO" id="PR:P36516"/>
<dbReference type="Proteomes" id="UP000002311">
    <property type="component" value="Chromosome XIII"/>
</dbReference>
<dbReference type="RNAct" id="P36516">
    <property type="molecule type" value="protein"/>
</dbReference>
<dbReference type="GO" id="GO:0005743">
    <property type="term" value="C:mitochondrial inner membrane"/>
    <property type="evidence" value="ECO:0000303"/>
    <property type="project" value="ComplexPortal"/>
</dbReference>
<dbReference type="GO" id="GO:0005762">
    <property type="term" value="C:mitochondrial large ribosomal subunit"/>
    <property type="evidence" value="ECO:0000314"/>
    <property type="project" value="SGD"/>
</dbReference>
<dbReference type="GO" id="GO:0005739">
    <property type="term" value="C:mitochondrion"/>
    <property type="evidence" value="ECO:0007005"/>
    <property type="project" value="SGD"/>
</dbReference>
<dbReference type="GO" id="GO:0003725">
    <property type="term" value="F:double-stranded RNA binding"/>
    <property type="evidence" value="ECO:0007669"/>
    <property type="project" value="InterPro"/>
</dbReference>
<dbReference type="GO" id="GO:0004525">
    <property type="term" value="F:ribonuclease III activity"/>
    <property type="evidence" value="ECO:0007669"/>
    <property type="project" value="InterPro"/>
</dbReference>
<dbReference type="GO" id="GO:0003735">
    <property type="term" value="F:structural constituent of ribosome"/>
    <property type="evidence" value="ECO:0000314"/>
    <property type="project" value="SGD"/>
</dbReference>
<dbReference type="GO" id="GO:0032543">
    <property type="term" value="P:mitochondrial translation"/>
    <property type="evidence" value="ECO:0000303"/>
    <property type="project" value="ComplexPortal"/>
</dbReference>
<dbReference type="GO" id="GO:0006396">
    <property type="term" value="P:RNA processing"/>
    <property type="evidence" value="ECO:0007669"/>
    <property type="project" value="InterPro"/>
</dbReference>
<dbReference type="CDD" id="cd19873">
    <property type="entry name" value="DSRM_MRPL3_like"/>
    <property type="match status" value="1"/>
</dbReference>
<dbReference type="FunFam" id="1.10.1520.10:FF:000014">
    <property type="entry name" value="60S ribosomal protein L3"/>
    <property type="match status" value="1"/>
</dbReference>
<dbReference type="FunFam" id="3.30.160.20:FF:000093">
    <property type="entry name" value="Mrpl3p"/>
    <property type="match status" value="1"/>
</dbReference>
<dbReference type="Gene3D" id="3.30.160.20">
    <property type="match status" value="1"/>
</dbReference>
<dbReference type="Gene3D" id="1.10.1520.10">
    <property type="entry name" value="Ribonuclease III domain"/>
    <property type="match status" value="1"/>
</dbReference>
<dbReference type="InterPro" id="IPR014720">
    <property type="entry name" value="dsRBD_dom"/>
</dbReference>
<dbReference type="InterPro" id="IPR044443">
    <property type="entry name" value="Ribosomal_mL44_DSRM_fung"/>
</dbReference>
<dbReference type="InterPro" id="IPR000999">
    <property type="entry name" value="RNase_III_dom"/>
</dbReference>
<dbReference type="InterPro" id="IPR036389">
    <property type="entry name" value="RNase_III_sf"/>
</dbReference>
<dbReference type="PANTHER" id="PTHR11207:SF32">
    <property type="entry name" value="LARGE RIBOSOMAL SUBUNIT PROTEIN ML44"/>
    <property type="match status" value="1"/>
</dbReference>
<dbReference type="PANTHER" id="PTHR11207">
    <property type="entry name" value="RIBONUCLEASE III"/>
    <property type="match status" value="1"/>
</dbReference>
<dbReference type="Pfam" id="PF00035">
    <property type="entry name" value="dsrm"/>
    <property type="match status" value="1"/>
</dbReference>
<dbReference type="Pfam" id="PF00636">
    <property type="entry name" value="Ribonuclease_3"/>
    <property type="match status" value="1"/>
</dbReference>
<dbReference type="SMART" id="SM00358">
    <property type="entry name" value="DSRM"/>
    <property type="match status" value="1"/>
</dbReference>
<dbReference type="SMART" id="SM00535">
    <property type="entry name" value="RIBOc"/>
    <property type="match status" value="1"/>
</dbReference>
<dbReference type="SUPFAM" id="SSF54768">
    <property type="entry name" value="dsRNA-binding domain-like"/>
    <property type="match status" value="1"/>
</dbReference>
<dbReference type="SUPFAM" id="SSF69065">
    <property type="entry name" value="RNase III domain-like"/>
    <property type="match status" value="1"/>
</dbReference>
<dbReference type="PROSITE" id="PS50137">
    <property type="entry name" value="DS_RBD"/>
    <property type="match status" value="1"/>
</dbReference>
<dbReference type="PROSITE" id="PS50142">
    <property type="entry name" value="RNASE_3_2"/>
    <property type="match status" value="1"/>
</dbReference>
<gene>
    <name type="primary">MRPL3</name>
    <name type="ordered locus">YMR024W</name>
    <name type="ORF">YM9711.14</name>
</gene>